<feature type="chain" id="PRO_1000090892" description="Ribonuclease H">
    <location>
        <begin position="1"/>
        <end position="153"/>
    </location>
</feature>
<feature type="domain" description="RNase H type-1" evidence="2">
    <location>
        <begin position="1"/>
        <end position="142"/>
    </location>
</feature>
<feature type="binding site" evidence="1">
    <location>
        <position position="10"/>
    </location>
    <ligand>
        <name>Mg(2+)</name>
        <dbReference type="ChEBI" id="CHEBI:18420"/>
        <label>1</label>
    </ligand>
</feature>
<feature type="binding site" evidence="1">
    <location>
        <position position="10"/>
    </location>
    <ligand>
        <name>Mg(2+)</name>
        <dbReference type="ChEBI" id="CHEBI:18420"/>
        <label>2</label>
    </ligand>
</feature>
<feature type="binding site" evidence="1">
    <location>
        <position position="48"/>
    </location>
    <ligand>
        <name>Mg(2+)</name>
        <dbReference type="ChEBI" id="CHEBI:18420"/>
        <label>1</label>
    </ligand>
</feature>
<feature type="binding site" evidence="1">
    <location>
        <position position="70"/>
    </location>
    <ligand>
        <name>Mg(2+)</name>
        <dbReference type="ChEBI" id="CHEBI:18420"/>
        <label>1</label>
    </ligand>
</feature>
<feature type="binding site" evidence="1">
    <location>
        <position position="134"/>
    </location>
    <ligand>
        <name>Mg(2+)</name>
        <dbReference type="ChEBI" id="CHEBI:18420"/>
        <label>2</label>
    </ligand>
</feature>
<accession>Q5NYP6</accession>
<reference key="1">
    <citation type="journal article" date="2005" name="Arch. Microbiol.">
        <title>The genome sequence of an anaerobic aromatic-degrading denitrifying bacterium, strain EbN1.</title>
        <authorList>
            <person name="Rabus R."/>
            <person name="Kube M."/>
            <person name="Heider J."/>
            <person name="Beck A."/>
            <person name="Heitmann K."/>
            <person name="Widdel F."/>
            <person name="Reinhardt R."/>
        </authorList>
    </citation>
    <scope>NUCLEOTIDE SEQUENCE [LARGE SCALE GENOMIC DNA]</scope>
    <source>
        <strain>DSM 19018 / LMG 30748 / EbN1</strain>
    </source>
</reference>
<proteinExistence type="inferred from homology"/>
<organism>
    <name type="scientific">Aromatoleum aromaticum (strain DSM 19018 / LMG 30748 / EbN1)</name>
    <name type="common">Azoarcus sp. (strain EbN1)</name>
    <dbReference type="NCBI Taxonomy" id="76114"/>
    <lineage>
        <taxon>Bacteria</taxon>
        <taxon>Pseudomonadati</taxon>
        <taxon>Pseudomonadota</taxon>
        <taxon>Betaproteobacteria</taxon>
        <taxon>Rhodocyclales</taxon>
        <taxon>Rhodocyclaceae</taxon>
        <taxon>Aromatoleum</taxon>
    </lineage>
</organism>
<comment type="function">
    <text evidence="1">Endonuclease that specifically degrades the RNA of RNA-DNA hybrids.</text>
</comment>
<comment type="catalytic activity">
    <reaction evidence="1">
        <text>Endonucleolytic cleavage to 5'-phosphomonoester.</text>
        <dbReference type="EC" id="3.1.26.4"/>
    </reaction>
</comment>
<comment type="cofactor">
    <cofactor evidence="1">
        <name>Mg(2+)</name>
        <dbReference type="ChEBI" id="CHEBI:18420"/>
    </cofactor>
    <text evidence="1">Binds 1 Mg(2+) ion per subunit. May bind a second metal ion at a regulatory site, or after substrate binding.</text>
</comment>
<comment type="subunit">
    <text evidence="1">Monomer.</text>
</comment>
<comment type="subcellular location">
    <subcellularLocation>
        <location evidence="1">Cytoplasm</location>
    </subcellularLocation>
</comment>
<comment type="similarity">
    <text evidence="1">Belongs to the RNase H family.</text>
</comment>
<keyword id="KW-0963">Cytoplasm</keyword>
<keyword id="KW-0255">Endonuclease</keyword>
<keyword id="KW-0378">Hydrolase</keyword>
<keyword id="KW-0460">Magnesium</keyword>
<keyword id="KW-0479">Metal-binding</keyword>
<keyword id="KW-0540">Nuclease</keyword>
<keyword id="KW-1185">Reference proteome</keyword>
<dbReference type="EC" id="3.1.26.4" evidence="1"/>
<dbReference type="EMBL" id="CR555306">
    <property type="protein sequence ID" value="CAI09818.1"/>
    <property type="molecule type" value="Genomic_DNA"/>
</dbReference>
<dbReference type="RefSeq" id="WP_011239471.1">
    <property type="nucleotide sequence ID" value="NC_006513.1"/>
</dbReference>
<dbReference type="SMR" id="Q5NYP6"/>
<dbReference type="STRING" id="76114.ebA6458"/>
<dbReference type="KEGG" id="eba:ebA6458"/>
<dbReference type="eggNOG" id="COG0328">
    <property type="taxonomic scope" value="Bacteria"/>
</dbReference>
<dbReference type="HOGENOM" id="CLU_030894_6_0_4"/>
<dbReference type="OrthoDB" id="7845843at2"/>
<dbReference type="Proteomes" id="UP000006552">
    <property type="component" value="Chromosome"/>
</dbReference>
<dbReference type="GO" id="GO:0005737">
    <property type="term" value="C:cytoplasm"/>
    <property type="evidence" value="ECO:0007669"/>
    <property type="project" value="UniProtKB-SubCell"/>
</dbReference>
<dbReference type="GO" id="GO:0000287">
    <property type="term" value="F:magnesium ion binding"/>
    <property type="evidence" value="ECO:0007669"/>
    <property type="project" value="UniProtKB-UniRule"/>
</dbReference>
<dbReference type="GO" id="GO:0003676">
    <property type="term" value="F:nucleic acid binding"/>
    <property type="evidence" value="ECO:0007669"/>
    <property type="project" value="InterPro"/>
</dbReference>
<dbReference type="GO" id="GO:0004523">
    <property type="term" value="F:RNA-DNA hybrid ribonuclease activity"/>
    <property type="evidence" value="ECO:0007669"/>
    <property type="project" value="UniProtKB-UniRule"/>
</dbReference>
<dbReference type="GO" id="GO:0043137">
    <property type="term" value="P:DNA replication, removal of RNA primer"/>
    <property type="evidence" value="ECO:0007669"/>
    <property type="project" value="TreeGrafter"/>
</dbReference>
<dbReference type="CDD" id="cd09278">
    <property type="entry name" value="RNase_HI_prokaryote_like"/>
    <property type="match status" value="1"/>
</dbReference>
<dbReference type="FunFam" id="3.30.420.10:FF:000089">
    <property type="entry name" value="Ribonuclease H"/>
    <property type="match status" value="1"/>
</dbReference>
<dbReference type="Gene3D" id="3.30.420.10">
    <property type="entry name" value="Ribonuclease H-like superfamily/Ribonuclease H"/>
    <property type="match status" value="1"/>
</dbReference>
<dbReference type="HAMAP" id="MF_00042">
    <property type="entry name" value="RNase_H"/>
    <property type="match status" value="1"/>
</dbReference>
<dbReference type="InterPro" id="IPR050092">
    <property type="entry name" value="RNase_H"/>
</dbReference>
<dbReference type="InterPro" id="IPR012337">
    <property type="entry name" value="RNaseH-like_sf"/>
</dbReference>
<dbReference type="InterPro" id="IPR002156">
    <property type="entry name" value="RNaseH_domain"/>
</dbReference>
<dbReference type="InterPro" id="IPR036397">
    <property type="entry name" value="RNaseH_sf"/>
</dbReference>
<dbReference type="InterPro" id="IPR022892">
    <property type="entry name" value="RNaseHI"/>
</dbReference>
<dbReference type="NCBIfam" id="NF001236">
    <property type="entry name" value="PRK00203.1"/>
    <property type="match status" value="1"/>
</dbReference>
<dbReference type="PANTHER" id="PTHR10642">
    <property type="entry name" value="RIBONUCLEASE H1"/>
    <property type="match status" value="1"/>
</dbReference>
<dbReference type="PANTHER" id="PTHR10642:SF26">
    <property type="entry name" value="RIBONUCLEASE H1"/>
    <property type="match status" value="1"/>
</dbReference>
<dbReference type="Pfam" id="PF00075">
    <property type="entry name" value="RNase_H"/>
    <property type="match status" value="1"/>
</dbReference>
<dbReference type="SUPFAM" id="SSF53098">
    <property type="entry name" value="Ribonuclease H-like"/>
    <property type="match status" value="1"/>
</dbReference>
<dbReference type="PROSITE" id="PS50879">
    <property type="entry name" value="RNASE_H_1"/>
    <property type="match status" value="1"/>
</dbReference>
<gene>
    <name evidence="1" type="primary">rnhA</name>
    <name type="ordered locus">AZOSEA36930</name>
    <name type="ORF">ebA6458</name>
</gene>
<sequence>MTDQIEIFTDGACSGNPGPGGWGAILRSGAHEKEIWGGEPHTTNNRMELLAVIRALELLKRPVVARVHTDSQYVQKGISEWIHGWKARGWKTAAKAPVKNEDLWRALDEAASRHQVQWVWVRGHAGHVENERADELARRGVDAVRRQGAAVAG</sequence>
<protein>
    <recommendedName>
        <fullName evidence="1">Ribonuclease H</fullName>
        <shortName evidence="1">RNase H</shortName>
        <ecNumber evidence="1">3.1.26.4</ecNumber>
    </recommendedName>
</protein>
<name>RNH_AROAE</name>
<evidence type="ECO:0000255" key="1">
    <source>
        <dbReference type="HAMAP-Rule" id="MF_00042"/>
    </source>
</evidence>
<evidence type="ECO:0000255" key="2">
    <source>
        <dbReference type="PROSITE-ProRule" id="PRU00408"/>
    </source>
</evidence>